<keyword id="KW-0025">Alternative splicing</keyword>
<keyword id="KW-0436">Ligase</keyword>
<keyword id="KW-1185">Reference proteome</keyword>
<name>GH32_ARATH</name>
<sequence length="549" mass="61827">MAVDSPLQSRMVSATTSEKDVKALKFIEEMTRNPDSVQEKVLGEILTRNSNTEYLKRFDLDGVVDRKTFKSKVPVVTYEDLKPEIQRISNGDCSPILSSHPITEFLTSSGTSAGERKLMPTIEEDLDRRQLLYSLLMPVMNLYVPGLDKGKGLYFLFVKSESKTSGGLPARPVLTSYYKSDHFKRRPYDPYNVYTSPNEAILCSDSSQSMYAQMLCGLLMRHEVLRLGAVFASGLLRAISFLQNNWKELARDISTGTLSSRIFDPAIKNRMSKILTKPDQELAEFLVGVCSQENWEGIITKIWPNTKYLDVIVTGAMAQYIPTLEYYSGGLPMACTMYASSESYFGINLKPMCKPSEVSYTIMPNMAYFEFLPHNHDGDGAAEASLDETSLVELANVEVGKEYELVITTYAGLYRYRVGDILRVTGFHNSAPQFKFIRRKNVLLSVESDKTDEAELQKAVENASRLFAEQGTRVIEYTSYAETKTIPGHYVIYWELLGRDQSNALMSEEVMAKCCLEMEESLNSVYRQSRVADKSIGPLGDTCGTERYV</sequence>
<dbReference type="EC" id="6.3.2.-"/>
<dbReference type="EMBL" id="AL035601">
    <property type="protein sequence ID" value="CAB38206.1"/>
    <property type="status" value="ALT_SEQ"/>
    <property type="molecule type" value="Genomic_DNA"/>
</dbReference>
<dbReference type="EMBL" id="AL161591">
    <property type="protein sequence ID" value="CAB80404.1"/>
    <property type="status" value="ALT_SEQ"/>
    <property type="molecule type" value="Genomic_DNA"/>
</dbReference>
<dbReference type="EMBL" id="CP002687">
    <property type="protein sequence ID" value="AEE86787.1"/>
    <property type="molecule type" value="Genomic_DNA"/>
</dbReference>
<dbReference type="EMBL" id="AY058161">
    <property type="protein sequence ID" value="AAL25575.1"/>
    <property type="molecule type" value="mRNA"/>
</dbReference>
<dbReference type="EMBL" id="AB028224">
    <property type="protein sequence ID" value="BAA87950.1"/>
    <property type="status" value="ALT_FRAME"/>
    <property type="molecule type" value="mRNA"/>
</dbReference>
<dbReference type="PIR" id="T04733">
    <property type="entry name" value="T04733"/>
</dbReference>
<dbReference type="PIR" id="T52435">
    <property type="entry name" value="T52435"/>
</dbReference>
<dbReference type="RefSeq" id="NP_195455.1">
    <molecule id="Q9SZT9-2"/>
    <property type="nucleotide sequence ID" value="NM_119902.4"/>
</dbReference>
<dbReference type="SMR" id="Q9SZT9"/>
<dbReference type="FunCoup" id="Q9SZT9">
    <property type="interactions" value="1175"/>
</dbReference>
<dbReference type="STRING" id="3702.Q9SZT9"/>
<dbReference type="PaxDb" id="3702-AT4G37390.1"/>
<dbReference type="PeptideAtlas" id="Q9SZT9"/>
<dbReference type="ProteomicsDB" id="220748">
    <molecule id="Q9SZT9-1"/>
</dbReference>
<dbReference type="EnsemblPlants" id="AT4G37390.1">
    <molecule id="Q9SZT9-2"/>
    <property type="protein sequence ID" value="AT4G37390.1"/>
    <property type="gene ID" value="AT4G37390"/>
</dbReference>
<dbReference type="GeneID" id="829893"/>
<dbReference type="Gramene" id="AT4G37390.1">
    <molecule id="Q9SZT9-2"/>
    <property type="protein sequence ID" value="AT4G37390.1"/>
    <property type="gene ID" value="AT4G37390"/>
</dbReference>
<dbReference type="KEGG" id="ath:AT4G37390"/>
<dbReference type="Araport" id="AT4G37390"/>
<dbReference type="TAIR" id="AT4G37390">
    <property type="gene designation" value="BRU6"/>
</dbReference>
<dbReference type="eggNOG" id="ENOG502QPMW">
    <property type="taxonomic scope" value="Eukaryota"/>
</dbReference>
<dbReference type="HOGENOM" id="CLU_016249_2_1_1"/>
<dbReference type="InParanoid" id="Q9SZT9"/>
<dbReference type="OMA" id="TKECEGD"/>
<dbReference type="BioCyc" id="ARA:AT4G37390-MONOMER"/>
<dbReference type="SABIO-RK" id="Q9SZT9"/>
<dbReference type="PRO" id="PR:Q9SZT9"/>
<dbReference type="Proteomes" id="UP000006548">
    <property type="component" value="Chromosome 4"/>
</dbReference>
<dbReference type="ExpressionAtlas" id="Q9SZT9">
    <property type="expression patterns" value="baseline and differential"/>
</dbReference>
<dbReference type="GO" id="GO:0010279">
    <property type="term" value="F:indole-3-acetic acid amido synthetase activity"/>
    <property type="evidence" value="ECO:0000314"/>
    <property type="project" value="TAIR"/>
</dbReference>
<dbReference type="GO" id="GO:0009733">
    <property type="term" value="P:response to auxin"/>
    <property type="evidence" value="ECO:0000315"/>
    <property type="project" value="TAIR"/>
</dbReference>
<dbReference type="InterPro" id="IPR004993">
    <property type="entry name" value="GH3"/>
</dbReference>
<dbReference type="InterPro" id="IPR055378">
    <property type="entry name" value="GH3_C"/>
</dbReference>
<dbReference type="InterPro" id="IPR055377">
    <property type="entry name" value="GH3_M"/>
</dbReference>
<dbReference type="PANTHER" id="PTHR31901">
    <property type="entry name" value="GH3 DOMAIN-CONTAINING PROTEIN"/>
    <property type="match status" value="1"/>
</dbReference>
<dbReference type="PANTHER" id="PTHR31901:SF7">
    <property type="entry name" value="INDOLE-3-ACETIC ACID-AMIDO SYNTHETASE GH3.2-RELATED"/>
    <property type="match status" value="1"/>
</dbReference>
<dbReference type="Pfam" id="PF03321">
    <property type="entry name" value="GH3"/>
    <property type="match status" value="1"/>
</dbReference>
<dbReference type="Pfam" id="PF23572">
    <property type="entry name" value="GH3_C"/>
    <property type="match status" value="1"/>
</dbReference>
<dbReference type="Pfam" id="PF23571">
    <property type="entry name" value="GH3_M"/>
    <property type="match status" value="1"/>
</dbReference>
<comment type="function">
    <text evidence="1 2">Catalyzes the synthesis of indole-3-acetic acid (IAA)-amino acid conjugates, providing a mechanism for the plant to cope with the presence of excess auxin. Strongly reactive with Glu, Gln, Trp, Asp, Ala, Leu, Phe, Gly, Tyr, Met, Ile and Val. Little or no product formation with His, Ser, Thr, Arg, Lys, or Cys. Also active on pyruvic and butyric acid analogs of IAA, PAA and the synthetic auxin naphthaleneacetic acid (NAA). The two chlorinated synthetic auxin herbicides 2,4-D and 3,6-dichloro-o-anisic acid (dicamba) cannot be used as substrates.</text>
</comment>
<comment type="alternative products">
    <event type="alternative splicing"/>
    <isoform>
        <id>Q9SZT9-1</id>
        <name>1</name>
        <sequence type="displayed"/>
    </isoform>
    <isoform>
        <id>Q9SZT9-2</id>
        <name>2</name>
        <sequence type="described" ref="VSP_042266"/>
    </isoform>
</comment>
<comment type="tissue specificity">
    <text evidence="1">Expressed in flowers, pollen, cotyledons, stipules, true leaves, hypocotyls, and all parts of the roots except for the primary root tips.</text>
</comment>
<comment type="induction">
    <text evidence="1 2">By auxin. Down-regulated by blue and far red lights.</text>
</comment>
<comment type="similarity">
    <text evidence="3">Belongs to the IAA-amido conjugating enzyme family.</text>
</comment>
<comment type="sequence caution" evidence="3">
    <conflict type="frameshift">
        <sequence resource="EMBL-CDS" id="BAA87950"/>
    </conflict>
</comment>
<comment type="sequence caution" evidence="3">
    <conflict type="erroneous gene model prediction">
        <sequence resource="EMBL-CDS" id="CAB38206"/>
    </conflict>
</comment>
<comment type="sequence caution" evidence="3">
    <conflict type="erroneous gene model prediction">
        <sequence resource="EMBL-CDS" id="CAB80404"/>
    </conflict>
</comment>
<reference key="1">
    <citation type="journal article" date="1999" name="Nature">
        <title>Sequence and analysis of chromosome 4 of the plant Arabidopsis thaliana.</title>
        <authorList>
            <person name="Mayer K.F.X."/>
            <person name="Schueller C."/>
            <person name="Wambutt R."/>
            <person name="Murphy G."/>
            <person name="Volckaert G."/>
            <person name="Pohl T."/>
            <person name="Duesterhoeft A."/>
            <person name="Stiekema W."/>
            <person name="Entian K.-D."/>
            <person name="Terryn N."/>
            <person name="Harris B."/>
            <person name="Ansorge W."/>
            <person name="Brandt P."/>
            <person name="Grivell L.A."/>
            <person name="Rieger M."/>
            <person name="Weichselgartner M."/>
            <person name="de Simone V."/>
            <person name="Obermaier B."/>
            <person name="Mache R."/>
            <person name="Mueller M."/>
            <person name="Kreis M."/>
            <person name="Delseny M."/>
            <person name="Puigdomenech P."/>
            <person name="Watson M."/>
            <person name="Schmidtheini T."/>
            <person name="Reichert B."/>
            <person name="Portetelle D."/>
            <person name="Perez-Alonso M."/>
            <person name="Boutry M."/>
            <person name="Bancroft I."/>
            <person name="Vos P."/>
            <person name="Hoheisel J."/>
            <person name="Zimmermann W."/>
            <person name="Wedler H."/>
            <person name="Ridley P."/>
            <person name="Langham S.-A."/>
            <person name="McCullagh B."/>
            <person name="Bilham L."/>
            <person name="Robben J."/>
            <person name="van der Schueren J."/>
            <person name="Grymonprez B."/>
            <person name="Chuang Y.-J."/>
            <person name="Vandenbussche F."/>
            <person name="Braeken M."/>
            <person name="Weltjens I."/>
            <person name="Voet M."/>
            <person name="Bastiaens I."/>
            <person name="Aert R."/>
            <person name="Defoor E."/>
            <person name="Weitzenegger T."/>
            <person name="Bothe G."/>
            <person name="Ramsperger U."/>
            <person name="Hilbert H."/>
            <person name="Braun M."/>
            <person name="Holzer E."/>
            <person name="Brandt A."/>
            <person name="Peters S."/>
            <person name="van Staveren M."/>
            <person name="Dirkse W."/>
            <person name="Mooijman P."/>
            <person name="Klein Lankhorst R."/>
            <person name="Rose M."/>
            <person name="Hauf J."/>
            <person name="Koetter P."/>
            <person name="Berneiser S."/>
            <person name="Hempel S."/>
            <person name="Feldpausch M."/>
            <person name="Lamberth S."/>
            <person name="Van den Daele H."/>
            <person name="De Keyser A."/>
            <person name="Buysshaert C."/>
            <person name="Gielen J."/>
            <person name="Villarroel R."/>
            <person name="De Clercq R."/>
            <person name="van Montagu M."/>
            <person name="Rogers J."/>
            <person name="Cronin A."/>
            <person name="Quail M.A."/>
            <person name="Bray-Allen S."/>
            <person name="Clark L."/>
            <person name="Doggett J."/>
            <person name="Hall S."/>
            <person name="Kay M."/>
            <person name="Lennard N."/>
            <person name="McLay K."/>
            <person name="Mayes R."/>
            <person name="Pettett A."/>
            <person name="Rajandream M.A."/>
            <person name="Lyne M."/>
            <person name="Benes V."/>
            <person name="Rechmann S."/>
            <person name="Borkova D."/>
            <person name="Bloecker H."/>
            <person name="Scharfe M."/>
            <person name="Grimm M."/>
            <person name="Loehnert T.-H."/>
            <person name="Dose S."/>
            <person name="de Haan M."/>
            <person name="Maarse A.C."/>
            <person name="Schaefer M."/>
            <person name="Mueller-Auer S."/>
            <person name="Gabel C."/>
            <person name="Fuchs M."/>
            <person name="Fartmann B."/>
            <person name="Granderath K."/>
            <person name="Dauner D."/>
            <person name="Herzl A."/>
            <person name="Neumann S."/>
            <person name="Argiriou A."/>
            <person name="Vitale D."/>
            <person name="Liguori R."/>
            <person name="Piravandi E."/>
            <person name="Massenet O."/>
            <person name="Quigley F."/>
            <person name="Clabauld G."/>
            <person name="Muendlein A."/>
            <person name="Felber R."/>
            <person name="Schnabl S."/>
            <person name="Hiller R."/>
            <person name="Schmidt W."/>
            <person name="Lecharny A."/>
            <person name="Aubourg S."/>
            <person name="Chefdor F."/>
            <person name="Cooke R."/>
            <person name="Berger C."/>
            <person name="Monfort A."/>
            <person name="Casacuberta E."/>
            <person name="Gibbons T."/>
            <person name="Weber N."/>
            <person name="Vandenbol M."/>
            <person name="Bargues M."/>
            <person name="Terol J."/>
            <person name="Torres A."/>
            <person name="Perez-Perez A."/>
            <person name="Purnelle B."/>
            <person name="Bent E."/>
            <person name="Johnson S."/>
            <person name="Tacon D."/>
            <person name="Jesse T."/>
            <person name="Heijnen L."/>
            <person name="Schwarz S."/>
            <person name="Scholler P."/>
            <person name="Heber S."/>
            <person name="Francs P."/>
            <person name="Bielke C."/>
            <person name="Frishman D."/>
            <person name="Haase D."/>
            <person name="Lemcke K."/>
            <person name="Mewes H.-W."/>
            <person name="Stocker S."/>
            <person name="Zaccaria P."/>
            <person name="Bevan M."/>
            <person name="Wilson R.K."/>
            <person name="de la Bastide M."/>
            <person name="Habermann K."/>
            <person name="Parnell L."/>
            <person name="Dedhia N."/>
            <person name="Gnoj L."/>
            <person name="Schutz K."/>
            <person name="Huang E."/>
            <person name="Spiegel L."/>
            <person name="Sekhon M."/>
            <person name="Murray J."/>
            <person name="Sheet P."/>
            <person name="Cordes M."/>
            <person name="Abu-Threideh J."/>
            <person name="Stoneking T."/>
            <person name="Kalicki J."/>
            <person name="Graves T."/>
            <person name="Harmon G."/>
            <person name="Edwards J."/>
            <person name="Latreille P."/>
            <person name="Courtney L."/>
            <person name="Cloud J."/>
            <person name="Abbott A."/>
            <person name="Scott K."/>
            <person name="Johnson D."/>
            <person name="Minx P."/>
            <person name="Bentley D."/>
            <person name="Fulton B."/>
            <person name="Miller N."/>
            <person name="Greco T."/>
            <person name="Kemp K."/>
            <person name="Kramer J."/>
            <person name="Fulton L."/>
            <person name="Mardis E."/>
            <person name="Dante M."/>
            <person name="Pepin K."/>
            <person name="Hillier L.W."/>
            <person name="Nelson J."/>
            <person name="Spieth J."/>
            <person name="Ryan E."/>
            <person name="Andrews S."/>
            <person name="Geisel C."/>
            <person name="Layman D."/>
            <person name="Du H."/>
            <person name="Ali J."/>
            <person name="Berghoff A."/>
            <person name="Jones K."/>
            <person name="Drone K."/>
            <person name="Cotton M."/>
            <person name="Joshu C."/>
            <person name="Antonoiu B."/>
            <person name="Zidanic M."/>
            <person name="Strong C."/>
            <person name="Sun H."/>
            <person name="Lamar B."/>
            <person name="Yordan C."/>
            <person name="Ma P."/>
            <person name="Zhong J."/>
            <person name="Preston R."/>
            <person name="Vil D."/>
            <person name="Shekher M."/>
            <person name="Matero A."/>
            <person name="Shah R."/>
            <person name="Swaby I.K."/>
            <person name="O'Shaughnessy A."/>
            <person name="Rodriguez M."/>
            <person name="Hoffman J."/>
            <person name="Till S."/>
            <person name="Granat S."/>
            <person name="Shohdy N."/>
            <person name="Hasegawa A."/>
            <person name="Hameed A."/>
            <person name="Lodhi M."/>
            <person name="Johnson A."/>
            <person name="Chen E."/>
            <person name="Marra M.A."/>
            <person name="Martienssen R."/>
            <person name="McCombie W.R."/>
        </authorList>
    </citation>
    <scope>NUCLEOTIDE SEQUENCE [LARGE SCALE GENOMIC DNA]</scope>
    <source>
        <strain>cv. Columbia</strain>
    </source>
</reference>
<reference key="2">
    <citation type="journal article" date="2017" name="Plant J.">
        <title>Araport11: a complete reannotation of the Arabidopsis thaliana reference genome.</title>
        <authorList>
            <person name="Cheng C.Y."/>
            <person name="Krishnakumar V."/>
            <person name="Chan A.P."/>
            <person name="Thibaud-Nissen F."/>
            <person name="Schobel S."/>
            <person name="Town C.D."/>
        </authorList>
    </citation>
    <scope>GENOME REANNOTATION</scope>
    <source>
        <strain>cv. Columbia</strain>
    </source>
</reference>
<reference key="3">
    <citation type="journal article" date="2003" name="Science">
        <title>Empirical analysis of transcriptional activity in the Arabidopsis genome.</title>
        <authorList>
            <person name="Yamada K."/>
            <person name="Lim J."/>
            <person name="Dale J.M."/>
            <person name="Chen H."/>
            <person name="Shinn P."/>
            <person name="Palm C.J."/>
            <person name="Southwick A.M."/>
            <person name="Wu H.C."/>
            <person name="Kim C.J."/>
            <person name="Nguyen M."/>
            <person name="Pham P.K."/>
            <person name="Cheuk R.F."/>
            <person name="Karlin-Newmann G."/>
            <person name="Liu S.X."/>
            <person name="Lam B."/>
            <person name="Sakano H."/>
            <person name="Wu T."/>
            <person name="Yu G."/>
            <person name="Miranda M."/>
            <person name="Quach H.L."/>
            <person name="Tripp M."/>
            <person name="Chang C.H."/>
            <person name="Lee J.M."/>
            <person name="Toriumi M.J."/>
            <person name="Chan M.M."/>
            <person name="Tang C.C."/>
            <person name="Onodera C.S."/>
            <person name="Deng J.M."/>
            <person name="Akiyama K."/>
            <person name="Ansari Y."/>
            <person name="Arakawa T."/>
            <person name="Banh J."/>
            <person name="Banno F."/>
            <person name="Bowser L."/>
            <person name="Brooks S.Y."/>
            <person name="Carninci P."/>
            <person name="Chao Q."/>
            <person name="Choy N."/>
            <person name="Enju A."/>
            <person name="Goldsmith A.D."/>
            <person name="Gurjal M."/>
            <person name="Hansen N.F."/>
            <person name="Hayashizaki Y."/>
            <person name="Johnson-Hopson C."/>
            <person name="Hsuan V.W."/>
            <person name="Iida K."/>
            <person name="Karnes M."/>
            <person name="Khan S."/>
            <person name="Koesema E."/>
            <person name="Ishida J."/>
            <person name="Jiang P.X."/>
            <person name="Jones T."/>
            <person name="Kawai J."/>
            <person name="Kamiya A."/>
            <person name="Meyers C."/>
            <person name="Nakajima M."/>
            <person name="Narusaka M."/>
            <person name="Seki M."/>
            <person name="Sakurai T."/>
            <person name="Satou M."/>
            <person name="Tamse R."/>
            <person name="Vaysberg M."/>
            <person name="Wallender E.K."/>
            <person name="Wong C."/>
            <person name="Yamamura Y."/>
            <person name="Yuan S."/>
            <person name="Shinozaki K."/>
            <person name="Davis R.W."/>
            <person name="Theologis A."/>
            <person name="Ecker J.R."/>
        </authorList>
    </citation>
    <scope>NUCLEOTIDE SEQUENCE [LARGE SCALE MRNA] (ISOFORM 1)</scope>
    <source>
        <strain>cv. Columbia</strain>
    </source>
</reference>
<reference key="4">
    <citation type="journal article" date="1999" name="Gene">
        <title>Isolation and analysis of cDNA within a 300 kb Arabidopsis thaliana genomic region located around the 100 map unit of chromosome 1.</title>
        <authorList>
            <person name="Kato A."/>
            <person name="Suzuki M."/>
            <person name="Kuwahara A."/>
            <person name="Ooe H."/>
            <person name="Higano-Inaba K."/>
            <person name="Komeda Y."/>
        </authorList>
    </citation>
    <scope>NUCLEOTIDE SEQUENCE [MRNA] OF 281-549 (ISOFORM 1)</scope>
</reference>
<reference key="5">
    <citation type="journal article" date="2004" name="Plant J.">
        <title>ydk1-D, an auxin-responsive GH3 mutant that is involved in hypocotyl and root elongation.</title>
        <authorList>
            <person name="Takase T."/>
            <person name="Nakazawa M."/>
            <person name="Ishikawa A."/>
            <person name="Kawashima M."/>
            <person name="Ichikawa T."/>
            <person name="Takahashi N."/>
            <person name="Shimada H."/>
            <person name="Manabe K."/>
            <person name="Matsui M."/>
        </authorList>
    </citation>
    <scope>FUNCTION</scope>
    <scope>TISSUE SPECIFICITY</scope>
    <scope>INDUCTION</scope>
</reference>
<reference key="6">
    <citation type="journal article" date="2005" name="Plant Cell">
        <title>Characterization of an Arabidopsis enzyme family that conjugates amino acids to indole-3-acetic acid.</title>
        <authorList>
            <person name="Staswick P.E."/>
            <person name="Serban B."/>
            <person name="Rowe M."/>
            <person name="Tiryaki I."/>
            <person name="Maldonado M.T."/>
            <person name="Maldonado M.C."/>
            <person name="Suza W."/>
        </authorList>
    </citation>
    <scope>FUNCTION</scope>
    <scope>CHARACTERIZATION</scope>
    <scope>INDUCTION</scope>
</reference>
<reference key="7">
    <citation type="journal article" date="2002" name="Plant Mol. Biol.">
        <title>Auxin-responsive gene expression: genes, promoters and regulatory factors.</title>
        <authorList>
            <person name="Hagen G."/>
            <person name="Guilfoyle T.J."/>
        </authorList>
    </citation>
    <scope>NOMENCLATURE</scope>
</reference>
<organism>
    <name type="scientific">Arabidopsis thaliana</name>
    <name type="common">Mouse-ear cress</name>
    <dbReference type="NCBI Taxonomy" id="3702"/>
    <lineage>
        <taxon>Eukaryota</taxon>
        <taxon>Viridiplantae</taxon>
        <taxon>Streptophyta</taxon>
        <taxon>Embryophyta</taxon>
        <taxon>Tracheophyta</taxon>
        <taxon>Spermatophyta</taxon>
        <taxon>Magnoliopsida</taxon>
        <taxon>eudicotyledons</taxon>
        <taxon>Gunneridae</taxon>
        <taxon>Pentapetalae</taxon>
        <taxon>rosids</taxon>
        <taxon>malvids</taxon>
        <taxon>Brassicales</taxon>
        <taxon>Brassicaceae</taxon>
        <taxon>Camelineae</taxon>
        <taxon>Arabidopsis</taxon>
    </lineage>
</organism>
<evidence type="ECO:0000269" key="1">
    <source>
    </source>
</evidence>
<evidence type="ECO:0000269" key="2">
    <source>
    </source>
</evidence>
<evidence type="ECO:0000305" key="3"/>
<feature type="chain" id="PRO_0000203571" description="Indole-3-acetic acid-amido synthetase GH3.2">
    <location>
        <begin position="1"/>
        <end position="549"/>
    </location>
</feature>
<feature type="splice variant" id="VSP_042266" description="In isoform 2." evidence="3">
    <original>GDTCGTERYV</original>
    <variation>EIRVVRNGTFEELMDYAISRGASINQYKVPRCVSFTPIMELLDSRVVSAHFSPSLPHWSPERRR</variation>
    <location>
        <begin position="540"/>
        <end position="549"/>
    </location>
</feature>
<feature type="sequence conflict" description="In Ref. 4; BAA87950." evidence="3" ref="4">
    <original>L</original>
    <variation>F</variation>
    <location>
        <position position="422"/>
    </location>
</feature>
<feature type="sequence conflict" description="In Ref. 3; AAL25575." evidence="3" ref="3">
    <original>V</original>
    <variation>G</variation>
    <location>
        <position position="474"/>
    </location>
</feature>
<protein>
    <recommendedName>
        <fullName>Indole-3-acetic acid-amido synthetase GH3.2</fullName>
        <ecNumber>6.3.2.-</ecNumber>
    </recommendedName>
    <alternativeName>
        <fullName>Auxin-responsive GH3-like protein 2</fullName>
        <shortName>AtGH3-2</shortName>
    </alternativeName>
    <alternativeName>
        <fullName>Protein YADOKARI 1</fullName>
    </alternativeName>
</protein>
<accession>Q9SZT9</accession>
<accession>F4JS15</accession>
<accession>Q93Z39</accession>
<accession>Q9SLU3</accession>
<gene>
    <name type="primary">GH3.2</name>
    <name type="synonym">BRU6</name>
    <name type="synonym">CF4</name>
    <name type="synonym">YDK1</name>
    <name type="ordered locus">At4g37390</name>
    <name type="ORF">F6G17.40</name>
</gene>
<proteinExistence type="evidence at protein level"/>